<comment type="function">
    <text evidence="1">Converts heme B (protoheme IX) to heme O by substitution of the vinyl group on carbon 2 of heme B porphyrin ring with a hydroxyethyl farnesyl side group.</text>
</comment>
<comment type="catalytic activity">
    <reaction evidence="1">
        <text>heme b + (2E,6E)-farnesyl diphosphate + H2O = Fe(II)-heme o + diphosphate</text>
        <dbReference type="Rhea" id="RHEA:28070"/>
        <dbReference type="ChEBI" id="CHEBI:15377"/>
        <dbReference type="ChEBI" id="CHEBI:33019"/>
        <dbReference type="ChEBI" id="CHEBI:60344"/>
        <dbReference type="ChEBI" id="CHEBI:60530"/>
        <dbReference type="ChEBI" id="CHEBI:175763"/>
        <dbReference type="EC" id="2.5.1.141"/>
    </reaction>
</comment>
<comment type="pathway">
    <text evidence="1">Porphyrin-containing compound metabolism; heme O biosynthesis; heme O from protoheme: step 1/1.</text>
</comment>
<comment type="subcellular location">
    <subcellularLocation>
        <location evidence="1">Cell inner membrane</location>
        <topology evidence="1">Multi-pass membrane protein</topology>
    </subcellularLocation>
</comment>
<comment type="miscellaneous">
    <text evidence="1">Carbon 2 of the heme B porphyrin ring is defined according to the Fischer nomenclature.</text>
</comment>
<comment type="similarity">
    <text evidence="1">Belongs to the UbiA prenyltransferase family. Protoheme IX farnesyltransferase subfamily.</text>
</comment>
<protein>
    <recommendedName>
        <fullName evidence="1">Protoheme IX farnesyltransferase</fullName>
        <ecNumber evidence="1">2.5.1.141</ecNumber>
    </recommendedName>
    <alternativeName>
        <fullName evidence="1">Heme B farnesyltransferase</fullName>
    </alternativeName>
    <alternativeName>
        <fullName evidence="1">Heme O synthase</fullName>
    </alternativeName>
</protein>
<reference key="1">
    <citation type="journal article" date="2007" name="J. Bacteriol.">
        <title>Whole-genome analysis of the methyl tert-butyl ether-degrading beta-proteobacterium Methylibium petroleiphilum PM1.</title>
        <authorList>
            <person name="Kane S.R."/>
            <person name="Chakicherla A.Y."/>
            <person name="Chain P.S.G."/>
            <person name="Schmidt R."/>
            <person name="Shin M.W."/>
            <person name="Legler T.C."/>
            <person name="Scow K.M."/>
            <person name="Larimer F.W."/>
            <person name="Lucas S.M."/>
            <person name="Richardson P.M."/>
            <person name="Hristova K.R."/>
        </authorList>
    </citation>
    <scope>NUCLEOTIDE SEQUENCE [LARGE SCALE GENOMIC DNA]</scope>
    <source>
        <strain>ATCC BAA-1232 / LMG 22953 / PM1</strain>
    </source>
</reference>
<proteinExistence type="inferred from homology"/>
<name>COXX_METPP</name>
<gene>
    <name evidence="1" type="primary">ctaB</name>
    <name type="ordered locus">Mpe_A3173</name>
</gene>
<sequence length="311" mass="34259">MSETLATPPAALHTWLSRWRQFSALTKPRVVQLIVFCAAIGMLLAVPGWPSLPAWGVALAASIGIWLVASAAAAFNCLVEQTIDSKMKRTAWRPTAKGELSNTQTLSFAVLLCAAGMAVLWVWVNALTMWLTFATFVGYAVIYTVLLKPATPQNIVIGGASGAMPPVLGWAAMRGELGAEPWILCLIIFLWTPPHFWALALYRAEDYARAGLPMLPVTHGNDFTRLQILLYTFVLFAATLLPFVYGMSGWFYLVAACALGVGFCGHAFRLWRHYSEALARRTFRFSIWHLSLLFAALLLDHYLGPLLRGTP</sequence>
<accession>A2SKN7</accession>
<dbReference type="EC" id="2.5.1.141" evidence="1"/>
<dbReference type="EMBL" id="CP000555">
    <property type="protein sequence ID" value="ABM96126.1"/>
    <property type="molecule type" value="Genomic_DNA"/>
</dbReference>
<dbReference type="RefSeq" id="WP_011830749.1">
    <property type="nucleotide sequence ID" value="NC_008825.1"/>
</dbReference>
<dbReference type="SMR" id="A2SKN7"/>
<dbReference type="STRING" id="420662.Mpe_A3173"/>
<dbReference type="KEGG" id="mpt:Mpe_A3173"/>
<dbReference type="eggNOG" id="COG0109">
    <property type="taxonomic scope" value="Bacteria"/>
</dbReference>
<dbReference type="HOGENOM" id="CLU_029631_0_2_4"/>
<dbReference type="UniPathway" id="UPA00834">
    <property type="reaction ID" value="UER00712"/>
</dbReference>
<dbReference type="Proteomes" id="UP000000366">
    <property type="component" value="Chromosome"/>
</dbReference>
<dbReference type="GO" id="GO:0005886">
    <property type="term" value="C:plasma membrane"/>
    <property type="evidence" value="ECO:0007669"/>
    <property type="project" value="UniProtKB-SubCell"/>
</dbReference>
<dbReference type="GO" id="GO:0008495">
    <property type="term" value="F:protoheme IX farnesyltransferase activity"/>
    <property type="evidence" value="ECO:0007669"/>
    <property type="project" value="UniProtKB-UniRule"/>
</dbReference>
<dbReference type="GO" id="GO:0048034">
    <property type="term" value="P:heme O biosynthetic process"/>
    <property type="evidence" value="ECO:0007669"/>
    <property type="project" value="UniProtKB-UniRule"/>
</dbReference>
<dbReference type="CDD" id="cd13957">
    <property type="entry name" value="PT_UbiA_Cox10"/>
    <property type="match status" value="1"/>
</dbReference>
<dbReference type="Gene3D" id="1.10.357.140">
    <property type="entry name" value="UbiA prenyltransferase"/>
    <property type="match status" value="1"/>
</dbReference>
<dbReference type="HAMAP" id="MF_00154">
    <property type="entry name" value="CyoE_CtaB"/>
    <property type="match status" value="1"/>
</dbReference>
<dbReference type="InterPro" id="IPR006369">
    <property type="entry name" value="Protohaem_IX_farnesylTrfase"/>
</dbReference>
<dbReference type="InterPro" id="IPR000537">
    <property type="entry name" value="UbiA_prenyltransferase"/>
</dbReference>
<dbReference type="InterPro" id="IPR030470">
    <property type="entry name" value="UbiA_prenylTrfase_CS"/>
</dbReference>
<dbReference type="InterPro" id="IPR044878">
    <property type="entry name" value="UbiA_sf"/>
</dbReference>
<dbReference type="NCBIfam" id="TIGR01473">
    <property type="entry name" value="cyoE_ctaB"/>
    <property type="match status" value="1"/>
</dbReference>
<dbReference type="NCBIfam" id="NF003349">
    <property type="entry name" value="PRK04375.1-2"/>
    <property type="match status" value="1"/>
</dbReference>
<dbReference type="PANTHER" id="PTHR43448:SF7">
    <property type="entry name" value="4-HYDROXYBENZOATE SOLANESYLTRANSFERASE"/>
    <property type="match status" value="1"/>
</dbReference>
<dbReference type="PANTHER" id="PTHR43448">
    <property type="entry name" value="PROTOHEME IX FARNESYLTRANSFERASE, MITOCHONDRIAL"/>
    <property type="match status" value="1"/>
</dbReference>
<dbReference type="Pfam" id="PF01040">
    <property type="entry name" value="UbiA"/>
    <property type="match status" value="1"/>
</dbReference>
<dbReference type="PROSITE" id="PS00943">
    <property type="entry name" value="UBIA"/>
    <property type="match status" value="1"/>
</dbReference>
<keyword id="KW-0997">Cell inner membrane</keyword>
<keyword id="KW-1003">Cell membrane</keyword>
<keyword id="KW-0350">Heme biosynthesis</keyword>
<keyword id="KW-0472">Membrane</keyword>
<keyword id="KW-1185">Reference proteome</keyword>
<keyword id="KW-0808">Transferase</keyword>
<keyword id="KW-0812">Transmembrane</keyword>
<keyword id="KW-1133">Transmembrane helix</keyword>
<organism>
    <name type="scientific">Methylibium petroleiphilum (strain ATCC BAA-1232 / LMG 22953 / PM1)</name>
    <dbReference type="NCBI Taxonomy" id="420662"/>
    <lineage>
        <taxon>Bacteria</taxon>
        <taxon>Pseudomonadati</taxon>
        <taxon>Pseudomonadota</taxon>
        <taxon>Betaproteobacteria</taxon>
        <taxon>Burkholderiales</taxon>
        <taxon>Sphaerotilaceae</taxon>
        <taxon>Methylibium</taxon>
    </lineage>
</organism>
<feature type="chain" id="PRO_0000327079" description="Protoheme IX farnesyltransferase">
    <location>
        <begin position="1"/>
        <end position="311"/>
    </location>
</feature>
<feature type="transmembrane region" description="Helical" evidence="1">
    <location>
        <begin position="30"/>
        <end position="50"/>
    </location>
</feature>
<feature type="transmembrane region" description="Helical" evidence="1">
    <location>
        <begin position="55"/>
        <end position="75"/>
    </location>
</feature>
<feature type="transmembrane region" description="Helical" evidence="1">
    <location>
        <begin position="108"/>
        <end position="128"/>
    </location>
</feature>
<feature type="transmembrane region" description="Helical" evidence="1">
    <location>
        <begin position="129"/>
        <end position="149"/>
    </location>
</feature>
<feature type="transmembrane region" description="Helical" evidence="1">
    <location>
        <begin position="153"/>
        <end position="173"/>
    </location>
</feature>
<feature type="transmembrane region" description="Helical" evidence="1">
    <location>
        <begin position="182"/>
        <end position="202"/>
    </location>
</feature>
<feature type="transmembrane region" description="Helical" evidence="1">
    <location>
        <begin position="233"/>
        <end position="253"/>
    </location>
</feature>
<feature type="transmembrane region" description="Helical" evidence="1">
    <location>
        <begin position="287"/>
        <end position="307"/>
    </location>
</feature>
<evidence type="ECO:0000255" key="1">
    <source>
        <dbReference type="HAMAP-Rule" id="MF_00154"/>
    </source>
</evidence>